<gene>
    <name evidence="1" type="primary">ahcY</name>
    <name type="ordered locus">Pcar_1924</name>
</gene>
<feature type="chain" id="PRO_1000024742" description="Adenosylhomocysteinase">
    <location>
        <begin position="1"/>
        <end position="475"/>
    </location>
</feature>
<feature type="binding site" evidence="1">
    <location>
        <position position="60"/>
    </location>
    <ligand>
        <name>substrate</name>
    </ligand>
</feature>
<feature type="binding site" evidence="1">
    <location>
        <position position="133"/>
    </location>
    <ligand>
        <name>substrate</name>
    </ligand>
</feature>
<feature type="binding site" evidence="1">
    <location>
        <position position="198"/>
    </location>
    <ligand>
        <name>substrate</name>
    </ligand>
</feature>
<feature type="binding site" evidence="1">
    <location>
        <begin position="199"/>
        <end position="201"/>
    </location>
    <ligand>
        <name>NAD(+)</name>
        <dbReference type="ChEBI" id="CHEBI:57540"/>
    </ligand>
</feature>
<feature type="binding site" evidence="1">
    <location>
        <position position="228"/>
    </location>
    <ligand>
        <name>substrate</name>
    </ligand>
</feature>
<feature type="binding site" evidence="1">
    <location>
        <position position="232"/>
    </location>
    <ligand>
        <name>substrate</name>
    </ligand>
</feature>
<feature type="binding site" evidence="1">
    <location>
        <position position="233"/>
    </location>
    <ligand>
        <name>NAD(+)</name>
        <dbReference type="ChEBI" id="CHEBI:57540"/>
    </ligand>
</feature>
<feature type="binding site" evidence="1">
    <location>
        <begin position="262"/>
        <end position="267"/>
    </location>
    <ligand>
        <name>NAD(+)</name>
        <dbReference type="ChEBI" id="CHEBI:57540"/>
    </ligand>
</feature>
<feature type="binding site" evidence="1">
    <location>
        <position position="285"/>
    </location>
    <ligand>
        <name>NAD(+)</name>
        <dbReference type="ChEBI" id="CHEBI:57540"/>
    </ligand>
</feature>
<feature type="binding site" evidence="1">
    <location>
        <position position="320"/>
    </location>
    <ligand>
        <name>NAD(+)</name>
        <dbReference type="ChEBI" id="CHEBI:57540"/>
    </ligand>
</feature>
<feature type="binding site" evidence="1">
    <location>
        <begin position="341"/>
        <end position="343"/>
    </location>
    <ligand>
        <name>NAD(+)</name>
        <dbReference type="ChEBI" id="CHEBI:57540"/>
    </ligand>
</feature>
<feature type="binding site" evidence="1">
    <location>
        <position position="389"/>
    </location>
    <ligand>
        <name>NAD(+)</name>
        <dbReference type="ChEBI" id="CHEBI:57540"/>
    </ligand>
</feature>
<keyword id="KW-0963">Cytoplasm</keyword>
<keyword id="KW-0378">Hydrolase</keyword>
<keyword id="KW-0520">NAD</keyword>
<keyword id="KW-0554">One-carbon metabolism</keyword>
<keyword id="KW-1185">Reference proteome</keyword>
<protein>
    <recommendedName>
        <fullName evidence="1">Adenosylhomocysteinase</fullName>
        <ecNumber evidence="1">3.13.2.1</ecNumber>
    </recommendedName>
    <alternativeName>
        <fullName evidence="1">S-adenosyl-L-homocysteine hydrolase</fullName>
        <shortName evidence="1">AdoHcyase</shortName>
    </alternativeName>
</protein>
<proteinExistence type="inferred from homology"/>
<name>SAHH_SYNC1</name>
<evidence type="ECO:0000255" key="1">
    <source>
        <dbReference type="HAMAP-Rule" id="MF_00563"/>
    </source>
</evidence>
<sequence length="475" mass="52642">MSSESISENYVVKDMGLAEWGRREIRMAEAEMPGLMAIREEYRGTKPLAGARITGSLHMTIQTAVLIETLAELGADLRWASCNIYSTQDHAAAAIAATGVPVFAYKGETLEEYWEYTFKALAYEEGPQLIVDDGGDATLLIHRGVERERAYARTGKVPEISHDNKELSIVDALLNRQLLVDAEYWQRMATGLLGVSEETTTGVHRLYHMARNGELLFPAFNVNDSVTKSKFDNLYGCRESLIDGIKRATDVMIAGKKCVVLGYGDVGKGCAQAFKGMGALVSVTEVDPICALQAAMEGFAVVDMDEACQWGDIFVTTTGNVDVITRSHMDVMKNEAIVCNIGHFDSEIQVDALYDDPSLTVHEVKPQVDQIEWPDGKRITVLAKGRLVNLGCATGHPSFVMSNSFTNQVLAQIELWQNSDRYENKVYVLPKQLDEKVARLHLANLGVKLTRMTEKQADYLGVPVDGPYKPEHYRY</sequence>
<accession>Q3A392</accession>
<organism>
    <name type="scientific">Syntrophotalea carbinolica (strain DSM 2380 / NBRC 103641 / GraBd1)</name>
    <name type="common">Pelobacter carbinolicus</name>
    <dbReference type="NCBI Taxonomy" id="338963"/>
    <lineage>
        <taxon>Bacteria</taxon>
        <taxon>Pseudomonadati</taxon>
        <taxon>Thermodesulfobacteriota</taxon>
        <taxon>Desulfuromonadia</taxon>
        <taxon>Desulfuromonadales</taxon>
        <taxon>Syntrophotaleaceae</taxon>
        <taxon>Syntrophotalea</taxon>
    </lineage>
</organism>
<reference key="1">
    <citation type="submission" date="2005-10" db="EMBL/GenBank/DDBJ databases">
        <title>Complete sequence of Pelobacter carbinolicus DSM 2380.</title>
        <authorList>
            <person name="Copeland A."/>
            <person name="Lucas S."/>
            <person name="Lapidus A."/>
            <person name="Barry K."/>
            <person name="Detter J.C."/>
            <person name="Glavina T."/>
            <person name="Hammon N."/>
            <person name="Israni S."/>
            <person name="Pitluck S."/>
            <person name="Chertkov O."/>
            <person name="Schmutz J."/>
            <person name="Larimer F."/>
            <person name="Land M."/>
            <person name="Kyrpides N."/>
            <person name="Ivanova N."/>
            <person name="Richardson P."/>
        </authorList>
    </citation>
    <scope>NUCLEOTIDE SEQUENCE [LARGE SCALE GENOMIC DNA]</scope>
    <source>
        <strain>DSM 2380 / NBRC 103641 / GraBd1</strain>
    </source>
</reference>
<comment type="function">
    <text evidence="1">May play a key role in the regulation of the intracellular concentration of adenosylhomocysteine.</text>
</comment>
<comment type="catalytic activity">
    <reaction evidence="1">
        <text>S-adenosyl-L-homocysteine + H2O = L-homocysteine + adenosine</text>
        <dbReference type="Rhea" id="RHEA:21708"/>
        <dbReference type="ChEBI" id="CHEBI:15377"/>
        <dbReference type="ChEBI" id="CHEBI:16335"/>
        <dbReference type="ChEBI" id="CHEBI:57856"/>
        <dbReference type="ChEBI" id="CHEBI:58199"/>
        <dbReference type="EC" id="3.13.2.1"/>
    </reaction>
</comment>
<comment type="cofactor">
    <cofactor evidence="1">
        <name>NAD(+)</name>
        <dbReference type="ChEBI" id="CHEBI:57540"/>
    </cofactor>
    <text evidence="1">Binds 1 NAD(+) per subunit.</text>
</comment>
<comment type="pathway">
    <text evidence="1">Amino-acid biosynthesis; L-homocysteine biosynthesis; L-homocysteine from S-adenosyl-L-homocysteine: step 1/1.</text>
</comment>
<comment type="subcellular location">
    <subcellularLocation>
        <location evidence="1">Cytoplasm</location>
    </subcellularLocation>
</comment>
<comment type="similarity">
    <text evidence="1">Belongs to the adenosylhomocysteinase family.</text>
</comment>
<dbReference type="EC" id="3.13.2.1" evidence="1"/>
<dbReference type="EMBL" id="CP000142">
    <property type="protein sequence ID" value="ABA89165.1"/>
    <property type="molecule type" value="Genomic_DNA"/>
</dbReference>
<dbReference type="RefSeq" id="WP_011341670.1">
    <property type="nucleotide sequence ID" value="NC_007498.2"/>
</dbReference>
<dbReference type="SMR" id="Q3A392"/>
<dbReference type="STRING" id="338963.Pcar_1924"/>
<dbReference type="KEGG" id="pca:Pcar_1924"/>
<dbReference type="eggNOG" id="COG0499">
    <property type="taxonomic scope" value="Bacteria"/>
</dbReference>
<dbReference type="HOGENOM" id="CLU_025194_2_1_7"/>
<dbReference type="OrthoDB" id="9802717at2"/>
<dbReference type="UniPathway" id="UPA00314">
    <property type="reaction ID" value="UER00076"/>
</dbReference>
<dbReference type="Proteomes" id="UP000002534">
    <property type="component" value="Chromosome"/>
</dbReference>
<dbReference type="GO" id="GO:0005829">
    <property type="term" value="C:cytosol"/>
    <property type="evidence" value="ECO:0007669"/>
    <property type="project" value="TreeGrafter"/>
</dbReference>
<dbReference type="GO" id="GO:0004013">
    <property type="term" value="F:adenosylhomocysteinase activity"/>
    <property type="evidence" value="ECO:0007669"/>
    <property type="project" value="UniProtKB-UniRule"/>
</dbReference>
<dbReference type="GO" id="GO:0071269">
    <property type="term" value="P:L-homocysteine biosynthetic process"/>
    <property type="evidence" value="ECO:0007669"/>
    <property type="project" value="UniProtKB-UniRule"/>
</dbReference>
<dbReference type="GO" id="GO:0006730">
    <property type="term" value="P:one-carbon metabolic process"/>
    <property type="evidence" value="ECO:0007669"/>
    <property type="project" value="UniProtKB-KW"/>
</dbReference>
<dbReference type="GO" id="GO:0033353">
    <property type="term" value="P:S-adenosylmethionine cycle"/>
    <property type="evidence" value="ECO:0007669"/>
    <property type="project" value="TreeGrafter"/>
</dbReference>
<dbReference type="CDD" id="cd00401">
    <property type="entry name" value="SAHH"/>
    <property type="match status" value="1"/>
</dbReference>
<dbReference type="FunFam" id="3.40.50.720:FF:000004">
    <property type="entry name" value="Adenosylhomocysteinase"/>
    <property type="match status" value="1"/>
</dbReference>
<dbReference type="Gene3D" id="3.40.50.1480">
    <property type="entry name" value="Adenosylhomocysteinase-like"/>
    <property type="match status" value="1"/>
</dbReference>
<dbReference type="Gene3D" id="3.40.50.720">
    <property type="entry name" value="NAD(P)-binding Rossmann-like Domain"/>
    <property type="match status" value="1"/>
</dbReference>
<dbReference type="HAMAP" id="MF_00563">
    <property type="entry name" value="AdoHcyase"/>
    <property type="match status" value="1"/>
</dbReference>
<dbReference type="InterPro" id="IPR042172">
    <property type="entry name" value="Adenosylhomocyst_ase-like_sf"/>
</dbReference>
<dbReference type="InterPro" id="IPR000043">
    <property type="entry name" value="Adenosylhomocysteinase-like"/>
</dbReference>
<dbReference type="InterPro" id="IPR015878">
    <property type="entry name" value="Ado_hCys_hydrolase_NAD-bd"/>
</dbReference>
<dbReference type="InterPro" id="IPR036291">
    <property type="entry name" value="NAD(P)-bd_dom_sf"/>
</dbReference>
<dbReference type="InterPro" id="IPR020082">
    <property type="entry name" value="S-Ado-L-homoCys_hydrolase_CS"/>
</dbReference>
<dbReference type="NCBIfam" id="TIGR00936">
    <property type="entry name" value="ahcY"/>
    <property type="match status" value="1"/>
</dbReference>
<dbReference type="NCBIfam" id="NF004005">
    <property type="entry name" value="PRK05476.2-3"/>
    <property type="match status" value="1"/>
</dbReference>
<dbReference type="PANTHER" id="PTHR23420">
    <property type="entry name" value="ADENOSYLHOMOCYSTEINASE"/>
    <property type="match status" value="1"/>
</dbReference>
<dbReference type="PANTHER" id="PTHR23420:SF0">
    <property type="entry name" value="ADENOSYLHOMOCYSTEINASE"/>
    <property type="match status" value="1"/>
</dbReference>
<dbReference type="Pfam" id="PF05221">
    <property type="entry name" value="AdoHcyase"/>
    <property type="match status" value="1"/>
</dbReference>
<dbReference type="Pfam" id="PF00670">
    <property type="entry name" value="AdoHcyase_NAD"/>
    <property type="match status" value="1"/>
</dbReference>
<dbReference type="PIRSF" id="PIRSF001109">
    <property type="entry name" value="Ad_hcy_hydrolase"/>
    <property type="match status" value="1"/>
</dbReference>
<dbReference type="SMART" id="SM00996">
    <property type="entry name" value="AdoHcyase"/>
    <property type="match status" value="1"/>
</dbReference>
<dbReference type="SMART" id="SM00997">
    <property type="entry name" value="AdoHcyase_NAD"/>
    <property type="match status" value="1"/>
</dbReference>
<dbReference type="SUPFAM" id="SSF52283">
    <property type="entry name" value="Formate/glycerate dehydrogenase catalytic domain-like"/>
    <property type="match status" value="1"/>
</dbReference>
<dbReference type="SUPFAM" id="SSF51735">
    <property type="entry name" value="NAD(P)-binding Rossmann-fold domains"/>
    <property type="match status" value="1"/>
</dbReference>
<dbReference type="PROSITE" id="PS00738">
    <property type="entry name" value="ADOHCYASE_1"/>
    <property type="match status" value="1"/>
</dbReference>
<dbReference type="PROSITE" id="PS00739">
    <property type="entry name" value="ADOHCYASE_2"/>
    <property type="match status" value="1"/>
</dbReference>